<evidence type="ECO:0000255" key="1">
    <source>
        <dbReference type="HAMAP-Rule" id="MF_01386"/>
    </source>
</evidence>
<geneLocation type="chloroplast"/>
<dbReference type="EMBL" id="Z67753">
    <property type="protein sequence ID" value="CAA91730.1"/>
    <property type="molecule type" value="Genomic_DNA"/>
</dbReference>
<dbReference type="PIR" id="S78357">
    <property type="entry name" value="S78357"/>
</dbReference>
<dbReference type="RefSeq" id="NP_043698.1">
    <property type="nucleotide sequence ID" value="NC_001713.1"/>
</dbReference>
<dbReference type="SMR" id="P49509"/>
<dbReference type="GeneID" id="801701"/>
<dbReference type="GO" id="GO:0009535">
    <property type="term" value="C:chloroplast thylakoid membrane"/>
    <property type="evidence" value="ECO:0007669"/>
    <property type="project" value="UniProtKB-SubCell"/>
</dbReference>
<dbReference type="GO" id="GO:0009523">
    <property type="term" value="C:photosystem II"/>
    <property type="evidence" value="ECO:0007669"/>
    <property type="project" value="UniProtKB-KW"/>
</dbReference>
<dbReference type="GO" id="GO:0015979">
    <property type="term" value="P:photosynthesis"/>
    <property type="evidence" value="ECO:0007669"/>
    <property type="project" value="UniProtKB-UniRule"/>
</dbReference>
<dbReference type="Gene3D" id="1.20.5.510">
    <property type="entry name" value="Single helix bin"/>
    <property type="match status" value="1"/>
</dbReference>
<dbReference type="HAMAP" id="MF_01386">
    <property type="entry name" value="PSII_PsbX_1"/>
    <property type="match status" value="1"/>
</dbReference>
<dbReference type="InterPro" id="IPR009518">
    <property type="entry name" value="PSII_PsbX"/>
</dbReference>
<dbReference type="InterPro" id="IPR023431">
    <property type="entry name" value="PSII_PsbX_type_1_subfam"/>
</dbReference>
<dbReference type="Pfam" id="PF06596">
    <property type="entry name" value="PsbX"/>
    <property type="match status" value="1"/>
</dbReference>
<protein>
    <recommendedName>
        <fullName evidence="1">Photosystem II reaction center protein X</fullName>
    </recommendedName>
</protein>
<feature type="chain" id="PRO_0000217289" description="Photosystem II reaction center protein X">
    <location>
        <begin position="1"/>
        <end position="38"/>
    </location>
</feature>
<feature type="transmembrane region" description="Helical" evidence="1">
    <location>
        <begin position="9"/>
        <end position="29"/>
    </location>
</feature>
<keyword id="KW-0150">Chloroplast</keyword>
<keyword id="KW-0472">Membrane</keyword>
<keyword id="KW-0602">Photosynthesis</keyword>
<keyword id="KW-0604">Photosystem II</keyword>
<keyword id="KW-0934">Plastid</keyword>
<keyword id="KW-0793">Thylakoid</keyword>
<keyword id="KW-0812">Transmembrane</keyword>
<keyword id="KW-1133">Transmembrane helix</keyword>
<name>PSBX_TRICV</name>
<accession>P49509</accession>
<proteinExistence type="inferred from homology"/>
<sequence>MTPSLANFISSLTAGGLVVLTIAVALIVISRTDRVTRF</sequence>
<gene>
    <name evidence="1" type="primary">psbX</name>
</gene>
<comment type="function">
    <text evidence="1">Involved in the binding and/or turnover of quinones at the Q(B) site of photosystem II (PSII). PSII is a light-driven water plastoquinone oxidoreductase, using light energy to abstract electrons from H(2)O, generating a proton gradient subsequently used for ATP formation.</text>
</comment>
<comment type="subunit">
    <text evidence="1">PSII is composed of 1 copy each of membrane proteins PsbA, PsbB, PsbC, PsbD, PsbE, PsbF, PsbH, PsbI, PsbJ, PsbK, PsbL, PsbM, PsbT, PsbX, PsbY, PsbZ, Psb30/Ycf12, at least 3 peripheral proteins of the oxygen-evolving complex and a large number of cofactors. It forms dimeric complexes.</text>
</comment>
<comment type="subcellular location">
    <subcellularLocation>
        <location evidence="1">Plastid</location>
        <location evidence="1">Chloroplast thylakoid membrane</location>
        <topology evidence="1">Single-pass membrane protein</topology>
    </subcellularLocation>
</comment>
<comment type="similarity">
    <text evidence="1">Belongs to the PsbX family. Type 1 subfamily.</text>
</comment>
<reference key="1">
    <citation type="journal article" date="1995" name="Plant Mol. Biol. Rep.">
        <title>The chloroplast genome of a chlorophyll a+c-containing alga, Odontella sinensis.</title>
        <authorList>
            <person name="Kowallik K.V."/>
            <person name="Stoebe B."/>
            <person name="Schaffran I."/>
            <person name="Kroth-Pancic P."/>
            <person name="Freier U."/>
        </authorList>
    </citation>
    <scope>NUCLEOTIDE SEQUENCE [LARGE SCALE GENOMIC DNA]</scope>
</reference>
<organism>
    <name type="scientific">Trieres chinensis</name>
    <name type="common">Marine centric diatom</name>
    <name type="synonym">Odontella sinensis</name>
    <dbReference type="NCBI Taxonomy" id="1514140"/>
    <lineage>
        <taxon>Eukaryota</taxon>
        <taxon>Sar</taxon>
        <taxon>Stramenopiles</taxon>
        <taxon>Ochrophyta</taxon>
        <taxon>Bacillariophyta</taxon>
        <taxon>Mediophyceae</taxon>
        <taxon>Biddulphiophycidae</taxon>
        <taxon>Eupodiscales</taxon>
        <taxon>Parodontellaceae</taxon>
        <taxon>Trieres</taxon>
    </lineage>
</organism>